<sequence length="517" mass="57437">MSPLALVSVSDKTNIIPFCKDLVEKFGYNILSSGGTAEYLTEAKVPVLKVADFTESPEILDGRVKTLHPKIHGGILAKRSNEEHQREILENKLELIDLVVVNLYPFKKKVEEQCPWEEAIENIDIGGPSMIRSAAKNHADVAVLVDPNQYQNYIEEIKKGPLSKDFKTKLAFEAFQHTASYDSAISNWISKEKDLRPSNFIESYPLIKQLRYGENPHQKALWYGLNNIGWNSAEQLQGKELSYNNILDLESALLTVLEFGYETKPNIKTESIAAVILKHNNPCGASISNSASSSFKNALKCDSVSAFGGIVAFNANVDKETALILKDIFLECVVAPSFDKEALEIFKTKKNLRVLKLTKEMLPKENQTCSKSIMGGILIQDSDNQENSEDSWISVTKKNPTEQEYLDLKFAWKICKHVKSNAIVVAKDQQTLGIGAGQMNRVGASKIALEAAKEIDSGGVLASDGFFPFADTVRLADKYGISSIIQPGGSIRDEESIKMCDSRGISMIFTHKRHFLH</sequence>
<accession>A2BUP7</accession>
<dbReference type="EC" id="2.1.2.3" evidence="1"/>
<dbReference type="EC" id="3.5.4.10" evidence="1"/>
<dbReference type="EMBL" id="CP000552">
    <property type="protein sequence ID" value="ABM71508.1"/>
    <property type="molecule type" value="Genomic_DNA"/>
</dbReference>
<dbReference type="RefSeq" id="WP_011819618.1">
    <property type="nucleotide sequence ID" value="NC_008817.1"/>
</dbReference>
<dbReference type="SMR" id="A2BUP7"/>
<dbReference type="STRING" id="167542.P9515_02991"/>
<dbReference type="GeneID" id="60200531"/>
<dbReference type="KEGG" id="pmc:P9515_02991"/>
<dbReference type="eggNOG" id="COG0138">
    <property type="taxonomic scope" value="Bacteria"/>
</dbReference>
<dbReference type="HOGENOM" id="CLU_016316_5_2_3"/>
<dbReference type="OrthoDB" id="9802065at2"/>
<dbReference type="UniPathway" id="UPA00074">
    <property type="reaction ID" value="UER00133"/>
</dbReference>
<dbReference type="UniPathway" id="UPA00074">
    <property type="reaction ID" value="UER00135"/>
</dbReference>
<dbReference type="Proteomes" id="UP000001589">
    <property type="component" value="Chromosome"/>
</dbReference>
<dbReference type="GO" id="GO:0005829">
    <property type="term" value="C:cytosol"/>
    <property type="evidence" value="ECO:0007669"/>
    <property type="project" value="TreeGrafter"/>
</dbReference>
<dbReference type="GO" id="GO:0003937">
    <property type="term" value="F:IMP cyclohydrolase activity"/>
    <property type="evidence" value="ECO:0007669"/>
    <property type="project" value="UniProtKB-UniRule"/>
</dbReference>
<dbReference type="GO" id="GO:0004643">
    <property type="term" value="F:phosphoribosylaminoimidazolecarboxamide formyltransferase activity"/>
    <property type="evidence" value="ECO:0007669"/>
    <property type="project" value="UniProtKB-UniRule"/>
</dbReference>
<dbReference type="GO" id="GO:0006189">
    <property type="term" value="P:'de novo' IMP biosynthetic process"/>
    <property type="evidence" value="ECO:0007669"/>
    <property type="project" value="UniProtKB-UniRule"/>
</dbReference>
<dbReference type="CDD" id="cd01421">
    <property type="entry name" value="IMPCH"/>
    <property type="match status" value="1"/>
</dbReference>
<dbReference type="FunFam" id="3.40.140.20:FF:000001">
    <property type="entry name" value="Bifunctional purine biosynthesis protein PurH"/>
    <property type="match status" value="1"/>
</dbReference>
<dbReference type="FunFam" id="3.40.50.1380:FF:000001">
    <property type="entry name" value="Bifunctional purine biosynthesis protein PurH"/>
    <property type="match status" value="1"/>
</dbReference>
<dbReference type="Gene3D" id="3.40.140.20">
    <property type="match status" value="2"/>
</dbReference>
<dbReference type="Gene3D" id="3.40.50.1380">
    <property type="entry name" value="Methylglyoxal synthase-like domain"/>
    <property type="match status" value="1"/>
</dbReference>
<dbReference type="HAMAP" id="MF_00139">
    <property type="entry name" value="PurH"/>
    <property type="match status" value="1"/>
</dbReference>
<dbReference type="InterPro" id="IPR024051">
    <property type="entry name" value="AICAR_Tfase_dup_dom_sf"/>
</dbReference>
<dbReference type="InterPro" id="IPR016193">
    <property type="entry name" value="Cytidine_deaminase-like"/>
</dbReference>
<dbReference type="InterPro" id="IPR011607">
    <property type="entry name" value="MGS-like_dom"/>
</dbReference>
<dbReference type="InterPro" id="IPR036914">
    <property type="entry name" value="MGS-like_dom_sf"/>
</dbReference>
<dbReference type="InterPro" id="IPR002695">
    <property type="entry name" value="PurH-like"/>
</dbReference>
<dbReference type="NCBIfam" id="NF002049">
    <property type="entry name" value="PRK00881.1"/>
    <property type="match status" value="1"/>
</dbReference>
<dbReference type="NCBIfam" id="TIGR00355">
    <property type="entry name" value="purH"/>
    <property type="match status" value="1"/>
</dbReference>
<dbReference type="PANTHER" id="PTHR11692:SF0">
    <property type="entry name" value="BIFUNCTIONAL PURINE BIOSYNTHESIS PROTEIN ATIC"/>
    <property type="match status" value="1"/>
</dbReference>
<dbReference type="PANTHER" id="PTHR11692">
    <property type="entry name" value="BIFUNCTIONAL PURINE BIOSYNTHESIS PROTEIN PURH"/>
    <property type="match status" value="1"/>
</dbReference>
<dbReference type="Pfam" id="PF01808">
    <property type="entry name" value="AICARFT_IMPCHas"/>
    <property type="match status" value="1"/>
</dbReference>
<dbReference type="Pfam" id="PF02142">
    <property type="entry name" value="MGS"/>
    <property type="match status" value="1"/>
</dbReference>
<dbReference type="PIRSF" id="PIRSF000414">
    <property type="entry name" value="AICARFT_IMPCHas"/>
    <property type="match status" value="1"/>
</dbReference>
<dbReference type="SMART" id="SM00798">
    <property type="entry name" value="AICARFT_IMPCHas"/>
    <property type="match status" value="1"/>
</dbReference>
<dbReference type="SMART" id="SM00851">
    <property type="entry name" value="MGS"/>
    <property type="match status" value="1"/>
</dbReference>
<dbReference type="SUPFAM" id="SSF53927">
    <property type="entry name" value="Cytidine deaminase-like"/>
    <property type="match status" value="1"/>
</dbReference>
<dbReference type="SUPFAM" id="SSF52335">
    <property type="entry name" value="Methylglyoxal synthase-like"/>
    <property type="match status" value="1"/>
</dbReference>
<dbReference type="PROSITE" id="PS51855">
    <property type="entry name" value="MGS"/>
    <property type="match status" value="1"/>
</dbReference>
<feature type="chain" id="PRO_1000018928" description="Bifunctional purine biosynthesis protein PurH">
    <location>
        <begin position="1"/>
        <end position="517"/>
    </location>
</feature>
<feature type="domain" description="MGS-like" evidence="2">
    <location>
        <begin position="1"/>
        <end position="145"/>
    </location>
</feature>
<organism>
    <name type="scientific">Prochlorococcus marinus (strain MIT 9515)</name>
    <dbReference type="NCBI Taxonomy" id="167542"/>
    <lineage>
        <taxon>Bacteria</taxon>
        <taxon>Bacillati</taxon>
        <taxon>Cyanobacteriota</taxon>
        <taxon>Cyanophyceae</taxon>
        <taxon>Synechococcales</taxon>
        <taxon>Prochlorococcaceae</taxon>
        <taxon>Prochlorococcus</taxon>
    </lineage>
</organism>
<evidence type="ECO:0000255" key="1">
    <source>
        <dbReference type="HAMAP-Rule" id="MF_00139"/>
    </source>
</evidence>
<evidence type="ECO:0000255" key="2">
    <source>
        <dbReference type="PROSITE-ProRule" id="PRU01202"/>
    </source>
</evidence>
<keyword id="KW-0378">Hydrolase</keyword>
<keyword id="KW-0511">Multifunctional enzyme</keyword>
<keyword id="KW-0658">Purine biosynthesis</keyword>
<keyword id="KW-0808">Transferase</keyword>
<proteinExistence type="inferred from homology"/>
<name>PUR9_PROM5</name>
<comment type="catalytic activity">
    <reaction evidence="1">
        <text>(6R)-10-formyltetrahydrofolate + 5-amino-1-(5-phospho-beta-D-ribosyl)imidazole-4-carboxamide = 5-formamido-1-(5-phospho-D-ribosyl)imidazole-4-carboxamide + (6S)-5,6,7,8-tetrahydrofolate</text>
        <dbReference type="Rhea" id="RHEA:22192"/>
        <dbReference type="ChEBI" id="CHEBI:57453"/>
        <dbReference type="ChEBI" id="CHEBI:58467"/>
        <dbReference type="ChEBI" id="CHEBI:58475"/>
        <dbReference type="ChEBI" id="CHEBI:195366"/>
        <dbReference type="EC" id="2.1.2.3"/>
    </reaction>
</comment>
<comment type="catalytic activity">
    <reaction evidence="1">
        <text>IMP + H2O = 5-formamido-1-(5-phospho-D-ribosyl)imidazole-4-carboxamide</text>
        <dbReference type="Rhea" id="RHEA:18445"/>
        <dbReference type="ChEBI" id="CHEBI:15377"/>
        <dbReference type="ChEBI" id="CHEBI:58053"/>
        <dbReference type="ChEBI" id="CHEBI:58467"/>
        <dbReference type="EC" id="3.5.4.10"/>
    </reaction>
</comment>
<comment type="pathway">
    <text evidence="1">Purine metabolism; IMP biosynthesis via de novo pathway; 5-formamido-1-(5-phospho-D-ribosyl)imidazole-4-carboxamide from 5-amino-1-(5-phospho-D-ribosyl)imidazole-4-carboxamide (10-formyl THF route): step 1/1.</text>
</comment>
<comment type="pathway">
    <text evidence="1">Purine metabolism; IMP biosynthesis via de novo pathway; IMP from 5-formamido-1-(5-phospho-D-ribosyl)imidazole-4-carboxamide: step 1/1.</text>
</comment>
<comment type="domain">
    <text evidence="1">The IMP cyclohydrolase activity resides in the N-terminal region.</text>
</comment>
<comment type="similarity">
    <text evidence="1">Belongs to the PurH family.</text>
</comment>
<protein>
    <recommendedName>
        <fullName evidence="1">Bifunctional purine biosynthesis protein PurH</fullName>
    </recommendedName>
    <domain>
        <recommendedName>
            <fullName evidence="1">Phosphoribosylaminoimidazolecarboxamide formyltransferase</fullName>
            <ecNumber evidence="1">2.1.2.3</ecNumber>
        </recommendedName>
        <alternativeName>
            <fullName evidence="1">AICAR transformylase</fullName>
        </alternativeName>
    </domain>
    <domain>
        <recommendedName>
            <fullName evidence="1">IMP cyclohydrolase</fullName>
            <ecNumber evidence="1">3.5.4.10</ecNumber>
        </recommendedName>
        <alternativeName>
            <fullName evidence="1">ATIC</fullName>
        </alternativeName>
        <alternativeName>
            <fullName evidence="1">IMP synthase</fullName>
        </alternativeName>
        <alternativeName>
            <fullName evidence="1">Inosinicase</fullName>
        </alternativeName>
    </domain>
</protein>
<gene>
    <name evidence="1" type="primary">purH</name>
    <name type="ordered locus">P9515_02991</name>
</gene>
<reference key="1">
    <citation type="journal article" date="2007" name="PLoS Genet.">
        <title>Patterns and implications of gene gain and loss in the evolution of Prochlorococcus.</title>
        <authorList>
            <person name="Kettler G.C."/>
            <person name="Martiny A.C."/>
            <person name="Huang K."/>
            <person name="Zucker J."/>
            <person name="Coleman M.L."/>
            <person name="Rodrigue S."/>
            <person name="Chen F."/>
            <person name="Lapidus A."/>
            <person name="Ferriera S."/>
            <person name="Johnson J."/>
            <person name="Steglich C."/>
            <person name="Church G.M."/>
            <person name="Richardson P."/>
            <person name="Chisholm S.W."/>
        </authorList>
    </citation>
    <scope>NUCLEOTIDE SEQUENCE [LARGE SCALE GENOMIC DNA]</scope>
    <source>
        <strain>MIT 9515</strain>
    </source>
</reference>